<organism>
    <name type="scientific">Calycanthus floridus var. glaucus</name>
    <name type="common">Eastern sweetshrub</name>
    <name type="synonym">Calycanthus fertilis var. ferax</name>
    <dbReference type="NCBI Taxonomy" id="212734"/>
    <lineage>
        <taxon>Eukaryota</taxon>
        <taxon>Viridiplantae</taxon>
        <taxon>Streptophyta</taxon>
        <taxon>Embryophyta</taxon>
        <taxon>Tracheophyta</taxon>
        <taxon>Spermatophyta</taxon>
        <taxon>Magnoliopsida</taxon>
        <taxon>Magnoliidae</taxon>
        <taxon>Laurales</taxon>
        <taxon>Calycanthaceae</taxon>
        <taxon>Calycanthus</taxon>
    </lineage>
</organism>
<evidence type="ECO:0000255" key="1">
    <source>
        <dbReference type="HAMAP-Rule" id="MF_00294"/>
    </source>
</evidence>
<evidence type="ECO:0000305" key="2"/>
<accession>Q7YJV5</accession>
<reference key="1">
    <citation type="journal article" date="2003" name="Plant Syst. Evol.">
        <title>The chloroplast genome of the 'basal' angiosperm Calycanthus fertilis -- structural and phylogenetic analyses.</title>
        <authorList>
            <person name="Goremykin V."/>
            <person name="Hirsch-Ernst K.I."/>
            <person name="Woelfl S."/>
            <person name="Hellwig F.H."/>
        </authorList>
    </citation>
    <scope>NUCLEOTIDE SEQUENCE [LARGE SCALE GENOMIC DNA]</scope>
</reference>
<proteinExistence type="inferred from homology"/>
<dbReference type="EMBL" id="AJ428413">
    <property type="protein sequence ID" value="CAD28742.1"/>
    <property type="molecule type" value="Genomic_DNA"/>
</dbReference>
<dbReference type="RefSeq" id="NP_862775.1">
    <property type="nucleotide sequence ID" value="NC_004993.1"/>
</dbReference>
<dbReference type="GeneID" id="2598029"/>
<dbReference type="GO" id="GO:0009507">
    <property type="term" value="C:chloroplast"/>
    <property type="evidence" value="ECO:0007669"/>
    <property type="project" value="UniProtKB-SubCell"/>
</dbReference>
<dbReference type="GO" id="GO:1990904">
    <property type="term" value="C:ribonucleoprotein complex"/>
    <property type="evidence" value="ECO:0007669"/>
    <property type="project" value="UniProtKB-KW"/>
</dbReference>
<dbReference type="GO" id="GO:0005840">
    <property type="term" value="C:ribosome"/>
    <property type="evidence" value="ECO:0007669"/>
    <property type="project" value="UniProtKB-KW"/>
</dbReference>
<dbReference type="GO" id="GO:0003735">
    <property type="term" value="F:structural constituent of ribosome"/>
    <property type="evidence" value="ECO:0007669"/>
    <property type="project" value="InterPro"/>
</dbReference>
<dbReference type="GO" id="GO:0006412">
    <property type="term" value="P:translation"/>
    <property type="evidence" value="ECO:0007669"/>
    <property type="project" value="UniProtKB-UniRule"/>
</dbReference>
<dbReference type="Gene3D" id="2.20.28.120">
    <property type="entry name" value="Ribosomal protein L33"/>
    <property type="match status" value="1"/>
</dbReference>
<dbReference type="HAMAP" id="MF_00294">
    <property type="entry name" value="Ribosomal_bL33"/>
    <property type="match status" value="1"/>
</dbReference>
<dbReference type="InterPro" id="IPR001705">
    <property type="entry name" value="Ribosomal_bL33"/>
</dbReference>
<dbReference type="InterPro" id="IPR018264">
    <property type="entry name" value="Ribosomal_bL33_CS"/>
</dbReference>
<dbReference type="InterPro" id="IPR038584">
    <property type="entry name" value="Ribosomal_bL33_sf"/>
</dbReference>
<dbReference type="InterPro" id="IPR011332">
    <property type="entry name" value="Ribosomal_zn-bd"/>
</dbReference>
<dbReference type="NCBIfam" id="NF001764">
    <property type="entry name" value="PRK00504.1"/>
    <property type="match status" value="1"/>
</dbReference>
<dbReference type="NCBIfam" id="NF001860">
    <property type="entry name" value="PRK00595.1"/>
    <property type="match status" value="1"/>
</dbReference>
<dbReference type="NCBIfam" id="TIGR01023">
    <property type="entry name" value="rpmG_bact"/>
    <property type="match status" value="1"/>
</dbReference>
<dbReference type="PANTHER" id="PTHR43168">
    <property type="entry name" value="50S RIBOSOMAL PROTEIN L33, CHLOROPLASTIC"/>
    <property type="match status" value="1"/>
</dbReference>
<dbReference type="PANTHER" id="PTHR43168:SF2">
    <property type="entry name" value="LARGE RIBOSOMAL SUBUNIT PROTEIN BL33C"/>
    <property type="match status" value="1"/>
</dbReference>
<dbReference type="Pfam" id="PF00471">
    <property type="entry name" value="Ribosomal_L33"/>
    <property type="match status" value="1"/>
</dbReference>
<dbReference type="SUPFAM" id="SSF57829">
    <property type="entry name" value="Zn-binding ribosomal proteins"/>
    <property type="match status" value="1"/>
</dbReference>
<dbReference type="PROSITE" id="PS00582">
    <property type="entry name" value="RIBOSOMAL_L33"/>
    <property type="match status" value="1"/>
</dbReference>
<feature type="chain" id="PRO_0000170277" description="Large ribosomal subunit protein bL33c">
    <location>
        <begin position="1"/>
        <end position="66"/>
    </location>
</feature>
<sequence length="66" mass="7651">MAKGKDVRVIIILECTGCARNGLNKESRGISRYITQKNRHNTPSRLELKKFCSYCYKHTIHAEIKK</sequence>
<protein>
    <recommendedName>
        <fullName evidence="1">Large ribosomal subunit protein bL33c</fullName>
    </recommendedName>
    <alternativeName>
        <fullName evidence="2">50S ribosomal protein L33, chloroplastic</fullName>
    </alternativeName>
</protein>
<comment type="subcellular location">
    <subcellularLocation>
        <location>Plastid</location>
        <location>Chloroplast</location>
    </subcellularLocation>
</comment>
<comment type="similarity">
    <text evidence="1">Belongs to the bacterial ribosomal protein bL33 family.</text>
</comment>
<name>RK33_CALFG</name>
<gene>
    <name evidence="1" type="primary">rpl33</name>
</gene>
<keyword id="KW-0150">Chloroplast</keyword>
<keyword id="KW-0934">Plastid</keyword>
<keyword id="KW-0687">Ribonucleoprotein</keyword>
<keyword id="KW-0689">Ribosomal protein</keyword>
<geneLocation type="chloroplast"/>